<dbReference type="EC" id="1.18.1.2"/>
<dbReference type="EMBL" id="Y14032">
    <property type="protein sequence ID" value="CAA74359.1"/>
    <property type="molecule type" value="mRNA"/>
</dbReference>
<dbReference type="PIR" id="T04079">
    <property type="entry name" value="T04079"/>
</dbReference>
<dbReference type="SMR" id="O04977"/>
<dbReference type="STRING" id="4097.O04977"/>
<dbReference type="PaxDb" id="4097-O04977"/>
<dbReference type="UniPathway" id="UPA00091"/>
<dbReference type="Proteomes" id="UP000084051">
    <property type="component" value="Unplaced"/>
</dbReference>
<dbReference type="GO" id="GO:0009570">
    <property type="term" value="C:chloroplast stroma"/>
    <property type="evidence" value="ECO:0007669"/>
    <property type="project" value="UniProtKB-SubCell"/>
</dbReference>
<dbReference type="GO" id="GO:0098807">
    <property type="term" value="C:chloroplast thylakoid membrane protein complex"/>
    <property type="evidence" value="ECO:0000318"/>
    <property type="project" value="GO_Central"/>
</dbReference>
<dbReference type="GO" id="GO:0009055">
    <property type="term" value="F:electron transfer activity"/>
    <property type="evidence" value="ECO:0000318"/>
    <property type="project" value="GO_Central"/>
</dbReference>
<dbReference type="GO" id="GO:0004324">
    <property type="term" value="F:ferredoxin-NADP+ reductase activity"/>
    <property type="evidence" value="ECO:0007669"/>
    <property type="project" value="UniProtKB-EC"/>
</dbReference>
<dbReference type="GO" id="GO:0022900">
    <property type="term" value="P:electron transport chain"/>
    <property type="evidence" value="ECO:0000318"/>
    <property type="project" value="GO_Central"/>
</dbReference>
<dbReference type="GO" id="GO:0015979">
    <property type="term" value="P:photosynthesis"/>
    <property type="evidence" value="ECO:0007669"/>
    <property type="project" value="UniProtKB-UniPathway"/>
</dbReference>
<dbReference type="CDD" id="cd06208">
    <property type="entry name" value="CYPOR_like_FNR"/>
    <property type="match status" value="1"/>
</dbReference>
<dbReference type="FunFam" id="2.40.30.10:FF:000048">
    <property type="entry name" value="Ferredoxin--NADP reductase, chloroplastic"/>
    <property type="match status" value="1"/>
</dbReference>
<dbReference type="FunFam" id="3.40.50.80:FF:000008">
    <property type="entry name" value="Ferredoxin--NADP reductase, chloroplastic"/>
    <property type="match status" value="1"/>
</dbReference>
<dbReference type="Gene3D" id="3.40.50.80">
    <property type="entry name" value="Nucleotide-binding domain of ferredoxin-NADP reductase (FNR) module"/>
    <property type="match status" value="1"/>
</dbReference>
<dbReference type="Gene3D" id="2.40.30.10">
    <property type="entry name" value="Translation factors"/>
    <property type="match status" value="1"/>
</dbReference>
<dbReference type="InterPro" id="IPR017927">
    <property type="entry name" value="FAD-bd_FR_type"/>
</dbReference>
<dbReference type="InterPro" id="IPR001709">
    <property type="entry name" value="Flavoprot_Pyr_Nucl_cyt_Rdtase"/>
</dbReference>
<dbReference type="InterPro" id="IPR015701">
    <property type="entry name" value="FNR"/>
</dbReference>
<dbReference type="InterPro" id="IPR039261">
    <property type="entry name" value="FNR_nucleotide-bd"/>
</dbReference>
<dbReference type="InterPro" id="IPR035442">
    <property type="entry name" value="FNR_plant_Cyanobacteria"/>
</dbReference>
<dbReference type="InterPro" id="IPR001433">
    <property type="entry name" value="OxRdtase_FAD/NAD-bd"/>
</dbReference>
<dbReference type="InterPro" id="IPR017938">
    <property type="entry name" value="Riboflavin_synthase-like_b-brl"/>
</dbReference>
<dbReference type="PANTHER" id="PTHR43314">
    <property type="match status" value="1"/>
</dbReference>
<dbReference type="Pfam" id="PF00175">
    <property type="entry name" value="NAD_binding_1"/>
    <property type="match status" value="1"/>
</dbReference>
<dbReference type="PIRSF" id="PIRSF501178">
    <property type="entry name" value="FNR-PetH"/>
    <property type="match status" value="1"/>
</dbReference>
<dbReference type="PIRSF" id="PIRSF000361">
    <property type="entry name" value="Frd-NADP+_RD"/>
    <property type="match status" value="1"/>
</dbReference>
<dbReference type="PRINTS" id="PR00371">
    <property type="entry name" value="FPNCR"/>
</dbReference>
<dbReference type="SUPFAM" id="SSF52343">
    <property type="entry name" value="Ferredoxin reductase-like, C-terminal NADP-linked domain"/>
    <property type="match status" value="1"/>
</dbReference>
<dbReference type="SUPFAM" id="SSF63380">
    <property type="entry name" value="Riboflavin synthase domain-like"/>
    <property type="match status" value="1"/>
</dbReference>
<dbReference type="PROSITE" id="PS51384">
    <property type="entry name" value="FAD_FR"/>
    <property type="match status" value="1"/>
</dbReference>
<name>FENR1_TOBAC</name>
<protein>
    <recommendedName>
        <fullName>Ferredoxin--NADP reductase, leaf-type isozyme, chloroplastic</fullName>
        <shortName>FNR</shortName>
        <ecNumber>1.18.1.2</ecNumber>
    </recommendedName>
</protein>
<accession>O04977</accession>
<proteinExistence type="evidence at transcript level"/>
<keyword id="KW-0150">Chloroplast</keyword>
<keyword id="KW-0249">Electron transport</keyword>
<keyword id="KW-0274">FAD</keyword>
<keyword id="KW-0285">Flavoprotein</keyword>
<keyword id="KW-0472">Membrane</keyword>
<keyword id="KW-0521">NADP</keyword>
<keyword id="KW-0560">Oxidoreductase</keyword>
<keyword id="KW-0602">Photosynthesis</keyword>
<keyword id="KW-0934">Plastid</keyword>
<keyword id="KW-1185">Reference proteome</keyword>
<keyword id="KW-0793">Thylakoid</keyword>
<keyword id="KW-0809">Transit peptide</keyword>
<keyword id="KW-0813">Transport</keyword>
<sequence length="362" mass="40445">MATAVSAAVSLPSSKSTSFSSRTSIISTDKINFNKVPLYYRNVSGGSRLVSIRAQVTTEAPAKVEKISKKQDEGVIVNKFRPKEPYVGRCLLNTKITGDDAPGETWHMVFSTEGEVPYREGQSIGVIADGVDANGKPHKLRLYSTASSALGDFGDSKTVSLCVKRLVYTNDKGEEVKGVCSNFLCDLKPGAEVKITGPVGKEMLMPKDPNATVIMLATGTGIAPFRSFLWKMFFEKHEDYKFNGTAWLFLGVPTSSSLLYKEEFEKMKEKAPENFRLDFAVSREQTNEKGEKMYIQTRMAQYAEELWTLLQKDNTFIYMCGLKGMEQGIDEIMSALAERDGIVWADYKKQLKKAEQWNVEVY</sequence>
<gene>
    <name type="primary">PETH</name>
</gene>
<reference key="1">
    <citation type="submission" date="1997-06" db="EMBL/GenBank/DDBJ databases">
        <authorList>
            <person name="Hajirezaei M."/>
            <person name="Krause K.P."/>
            <person name="Sonnewald U."/>
        </authorList>
    </citation>
    <scope>NUCLEOTIDE SEQUENCE [MRNA]</scope>
    <source>
        <strain>cv. Samsun NN</strain>
    </source>
</reference>
<evidence type="ECO:0000250" key="1"/>
<evidence type="ECO:0000255" key="2"/>
<evidence type="ECO:0000255" key="3">
    <source>
        <dbReference type="PROSITE-ProRule" id="PRU00716"/>
    </source>
</evidence>
<evidence type="ECO:0000256" key="4">
    <source>
        <dbReference type="SAM" id="MobiDB-lite"/>
    </source>
</evidence>
<evidence type="ECO:0000305" key="5"/>
<organism>
    <name type="scientific">Nicotiana tabacum</name>
    <name type="common">Common tobacco</name>
    <dbReference type="NCBI Taxonomy" id="4097"/>
    <lineage>
        <taxon>Eukaryota</taxon>
        <taxon>Viridiplantae</taxon>
        <taxon>Streptophyta</taxon>
        <taxon>Embryophyta</taxon>
        <taxon>Tracheophyta</taxon>
        <taxon>Spermatophyta</taxon>
        <taxon>Magnoliopsida</taxon>
        <taxon>eudicotyledons</taxon>
        <taxon>Gunneridae</taxon>
        <taxon>Pentapetalae</taxon>
        <taxon>asterids</taxon>
        <taxon>lamiids</taxon>
        <taxon>Solanales</taxon>
        <taxon>Solanaceae</taxon>
        <taxon>Nicotianoideae</taxon>
        <taxon>Nicotianeae</taxon>
        <taxon>Nicotiana</taxon>
    </lineage>
</organism>
<comment type="function">
    <text>May play a key role in regulating the relative amounts of cyclic and non-cyclic electron flow to meet the demands of the plant for ATP and reducing power.</text>
</comment>
<comment type="catalytic activity">
    <reaction>
        <text>2 reduced [2Fe-2S]-[ferredoxin] + NADP(+) + H(+) = 2 oxidized [2Fe-2S]-[ferredoxin] + NADPH</text>
        <dbReference type="Rhea" id="RHEA:20125"/>
        <dbReference type="Rhea" id="RHEA-COMP:10000"/>
        <dbReference type="Rhea" id="RHEA-COMP:10001"/>
        <dbReference type="ChEBI" id="CHEBI:15378"/>
        <dbReference type="ChEBI" id="CHEBI:33737"/>
        <dbReference type="ChEBI" id="CHEBI:33738"/>
        <dbReference type="ChEBI" id="CHEBI:57783"/>
        <dbReference type="ChEBI" id="CHEBI:58349"/>
        <dbReference type="EC" id="1.18.1.2"/>
    </reaction>
</comment>
<comment type="cofactor">
    <cofactor>
        <name>FAD</name>
        <dbReference type="ChEBI" id="CHEBI:57692"/>
    </cofactor>
</comment>
<comment type="pathway">
    <text>Energy metabolism; photosynthesis.</text>
</comment>
<comment type="subcellular location">
    <subcellularLocation>
        <location>Plastid</location>
        <location>Chloroplast stroma</location>
    </subcellularLocation>
    <subcellularLocation>
        <location evidence="5">Plastid</location>
        <location evidence="5">Chloroplast thylakoid membrane</location>
        <topology evidence="5">Peripheral membrane protein</topology>
        <orientation evidence="5">Stromal side</orientation>
    </subcellularLocation>
    <text>In the vicinity of the photosystem I in the non-stacked and fringe portion of the membrane.</text>
</comment>
<comment type="similarity">
    <text evidence="5">Belongs to the ferredoxin--NADP reductase type 1 family.</text>
</comment>
<feature type="transit peptide" description="Chloroplast" evidence="2">
    <location>
        <begin position="1"/>
        <end position="62"/>
    </location>
</feature>
<feature type="chain" id="PRO_0000019413" description="Ferredoxin--NADP reductase, leaf-type isozyme, chloroplastic">
    <location>
        <begin position="63"/>
        <end position="362"/>
    </location>
</feature>
<feature type="domain" description="FAD-binding FR-type" evidence="3">
    <location>
        <begin position="83"/>
        <end position="205"/>
    </location>
</feature>
<feature type="region of interest" description="Disordered" evidence="4">
    <location>
        <begin position="1"/>
        <end position="20"/>
    </location>
</feature>
<feature type="compositionally biased region" description="Low complexity" evidence="4">
    <location>
        <begin position="10"/>
        <end position="20"/>
    </location>
</feature>
<feature type="binding site" evidence="1">
    <location>
        <begin position="141"/>
        <end position="144"/>
    </location>
    <ligand>
        <name>FAD</name>
        <dbReference type="ChEBI" id="CHEBI:57692"/>
    </ligand>
</feature>
<feature type="binding site" evidence="1">
    <location>
        <position position="144"/>
    </location>
    <ligand>
        <name>NADP(+)</name>
        <dbReference type="ChEBI" id="CHEBI:58349"/>
    </ligand>
</feature>
<feature type="binding site" evidence="1">
    <location>
        <begin position="162"/>
        <end position="164"/>
    </location>
    <ligand>
        <name>FAD</name>
        <dbReference type="ChEBI" id="CHEBI:57692"/>
    </ligand>
</feature>
<feature type="binding site" evidence="1">
    <location>
        <position position="164"/>
    </location>
    <ligand>
        <name>NADP(+)</name>
        <dbReference type="ChEBI" id="CHEBI:58349"/>
    </ligand>
</feature>
<feature type="binding site" evidence="1">
    <location>
        <position position="168"/>
    </location>
    <ligand>
        <name>FAD</name>
        <dbReference type="ChEBI" id="CHEBI:57692"/>
    </ligand>
</feature>
<feature type="binding site" evidence="1">
    <location>
        <begin position="179"/>
        <end position="181"/>
    </location>
    <ligand>
        <name>FAD</name>
        <dbReference type="ChEBI" id="CHEBI:57692"/>
    </ligand>
</feature>
<feature type="binding site" evidence="1">
    <location>
        <position position="220"/>
    </location>
    <ligand>
        <name>FAD</name>
        <dbReference type="ChEBI" id="CHEBI:57692"/>
    </ligand>
</feature>
<feature type="binding site" evidence="1">
    <location>
        <position position="220"/>
    </location>
    <ligand>
        <name>NADP(+)</name>
        <dbReference type="ChEBI" id="CHEBI:58349"/>
    </ligand>
</feature>
<feature type="binding site" evidence="1">
    <location>
        <begin position="252"/>
        <end position="253"/>
    </location>
    <ligand>
        <name>NADP(+)</name>
        <dbReference type="ChEBI" id="CHEBI:58349"/>
    </ligand>
</feature>
<feature type="binding site" evidence="1">
    <location>
        <begin position="282"/>
        <end position="283"/>
    </location>
    <ligand>
        <name>NADP(+)</name>
        <dbReference type="ChEBI" id="CHEBI:58349"/>
    </ligand>
</feature>
<feature type="binding site" evidence="1">
    <location>
        <position position="292"/>
    </location>
    <ligand>
        <name>NADP(+)</name>
        <dbReference type="ChEBI" id="CHEBI:58349"/>
    </ligand>
</feature>
<feature type="binding site" evidence="1">
    <location>
        <begin position="321"/>
        <end position="322"/>
    </location>
    <ligand>
        <name>NADP(+)</name>
        <dbReference type="ChEBI" id="CHEBI:58349"/>
    </ligand>
</feature>
<feature type="binding site" evidence="1">
    <location>
        <position position="360"/>
    </location>
    <ligand>
        <name>NADP(+)</name>
        <dbReference type="ChEBI" id="CHEBI:58349"/>
    </ligand>
</feature>